<accession>A0KIK4</accession>
<protein>
    <recommendedName>
        <fullName evidence="1">Ribonuclease H</fullName>
        <shortName evidence="1">RNase H</shortName>
        <ecNumber evidence="1">3.1.26.4</ecNumber>
    </recommendedName>
</protein>
<name>RNH_AERHH</name>
<sequence length="154" mass="17297">MLKKIDLYTDGSCLGNPGPGGYGAVMVYGKHRKELAGGFRLTTNNRMELMAAIMGLRTLNEPCQVRLTTDSQYVRQGITQWIIGWKKKGWVTASRQPVKNVDLWQALDAEVARHQIEWLWVKGHSGHPENERCDELAREAASGKQLAEDTGYQP</sequence>
<feature type="chain" id="PRO_1000074631" description="Ribonuclease H">
    <location>
        <begin position="1"/>
        <end position="154"/>
    </location>
</feature>
<feature type="domain" description="RNase H type-1" evidence="2">
    <location>
        <begin position="1"/>
        <end position="142"/>
    </location>
</feature>
<feature type="region of interest" description="Disordered" evidence="3">
    <location>
        <begin position="133"/>
        <end position="154"/>
    </location>
</feature>
<feature type="binding site" evidence="1">
    <location>
        <position position="10"/>
    </location>
    <ligand>
        <name>Mg(2+)</name>
        <dbReference type="ChEBI" id="CHEBI:18420"/>
        <label>1</label>
    </ligand>
</feature>
<feature type="binding site" evidence="1">
    <location>
        <position position="10"/>
    </location>
    <ligand>
        <name>Mg(2+)</name>
        <dbReference type="ChEBI" id="CHEBI:18420"/>
        <label>2</label>
    </ligand>
</feature>
<feature type="binding site" evidence="1">
    <location>
        <position position="48"/>
    </location>
    <ligand>
        <name>Mg(2+)</name>
        <dbReference type="ChEBI" id="CHEBI:18420"/>
        <label>1</label>
    </ligand>
</feature>
<feature type="binding site" evidence="1">
    <location>
        <position position="70"/>
    </location>
    <ligand>
        <name>Mg(2+)</name>
        <dbReference type="ChEBI" id="CHEBI:18420"/>
        <label>1</label>
    </ligand>
</feature>
<feature type="binding site" evidence="1">
    <location>
        <position position="134"/>
    </location>
    <ligand>
        <name>Mg(2+)</name>
        <dbReference type="ChEBI" id="CHEBI:18420"/>
        <label>2</label>
    </ligand>
</feature>
<gene>
    <name evidence="1" type="primary">rnhA</name>
    <name type="ordered locus">AHA_1568</name>
</gene>
<reference key="1">
    <citation type="journal article" date="2006" name="J. Bacteriol.">
        <title>Genome sequence of Aeromonas hydrophila ATCC 7966T: jack of all trades.</title>
        <authorList>
            <person name="Seshadri R."/>
            <person name="Joseph S.W."/>
            <person name="Chopra A.K."/>
            <person name="Sha J."/>
            <person name="Shaw J."/>
            <person name="Graf J."/>
            <person name="Haft D.H."/>
            <person name="Wu M."/>
            <person name="Ren Q."/>
            <person name="Rosovitz M.J."/>
            <person name="Madupu R."/>
            <person name="Tallon L."/>
            <person name="Kim M."/>
            <person name="Jin S."/>
            <person name="Vuong H."/>
            <person name="Stine O.C."/>
            <person name="Ali A."/>
            <person name="Horneman A.J."/>
            <person name="Heidelberg J.F."/>
        </authorList>
    </citation>
    <scope>NUCLEOTIDE SEQUENCE [LARGE SCALE GENOMIC DNA]</scope>
    <source>
        <strain>ATCC 7966 / DSM 30187 / BCRC 13018 / CCUG 14551 / JCM 1027 / KCTC 2358 / NCIMB 9240 / NCTC 8049</strain>
    </source>
</reference>
<dbReference type="EC" id="3.1.26.4" evidence="1"/>
<dbReference type="EMBL" id="CP000462">
    <property type="protein sequence ID" value="ABK39078.1"/>
    <property type="molecule type" value="Genomic_DNA"/>
</dbReference>
<dbReference type="RefSeq" id="WP_011705464.1">
    <property type="nucleotide sequence ID" value="NC_008570.1"/>
</dbReference>
<dbReference type="RefSeq" id="YP_856105.1">
    <property type="nucleotide sequence ID" value="NC_008570.1"/>
</dbReference>
<dbReference type="SMR" id="A0KIK4"/>
<dbReference type="STRING" id="380703.AHA_1568"/>
<dbReference type="EnsemblBacteria" id="ABK39078">
    <property type="protein sequence ID" value="ABK39078"/>
    <property type="gene ID" value="AHA_1568"/>
</dbReference>
<dbReference type="GeneID" id="4487044"/>
<dbReference type="KEGG" id="aha:AHA_1568"/>
<dbReference type="PATRIC" id="fig|380703.7.peg.1580"/>
<dbReference type="eggNOG" id="COG0328">
    <property type="taxonomic scope" value="Bacteria"/>
</dbReference>
<dbReference type="HOGENOM" id="CLU_030894_6_0_6"/>
<dbReference type="OrthoDB" id="7845843at2"/>
<dbReference type="Proteomes" id="UP000000756">
    <property type="component" value="Chromosome"/>
</dbReference>
<dbReference type="GO" id="GO:0005737">
    <property type="term" value="C:cytoplasm"/>
    <property type="evidence" value="ECO:0007669"/>
    <property type="project" value="UniProtKB-SubCell"/>
</dbReference>
<dbReference type="GO" id="GO:0000287">
    <property type="term" value="F:magnesium ion binding"/>
    <property type="evidence" value="ECO:0007669"/>
    <property type="project" value="UniProtKB-UniRule"/>
</dbReference>
<dbReference type="GO" id="GO:0003676">
    <property type="term" value="F:nucleic acid binding"/>
    <property type="evidence" value="ECO:0007669"/>
    <property type="project" value="InterPro"/>
</dbReference>
<dbReference type="GO" id="GO:0004523">
    <property type="term" value="F:RNA-DNA hybrid ribonuclease activity"/>
    <property type="evidence" value="ECO:0007669"/>
    <property type="project" value="UniProtKB-UniRule"/>
</dbReference>
<dbReference type="GO" id="GO:0043137">
    <property type="term" value="P:DNA replication, removal of RNA primer"/>
    <property type="evidence" value="ECO:0007669"/>
    <property type="project" value="TreeGrafter"/>
</dbReference>
<dbReference type="CDD" id="cd09278">
    <property type="entry name" value="RNase_HI_prokaryote_like"/>
    <property type="match status" value="1"/>
</dbReference>
<dbReference type="FunFam" id="3.30.420.10:FF:000008">
    <property type="entry name" value="Ribonuclease H"/>
    <property type="match status" value="1"/>
</dbReference>
<dbReference type="Gene3D" id="3.30.420.10">
    <property type="entry name" value="Ribonuclease H-like superfamily/Ribonuclease H"/>
    <property type="match status" value="1"/>
</dbReference>
<dbReference type="HAMAP" id="MF_00042">
    <property type="entry name" value="RNase_H"/>
    <property type="match status" value="1"/>
</dbReference>
<dbReference type="InterPro" id="IPR050092">
    <property type="entry name" value="RNase_H"/>
</dbReference>
<dbReference type="InterPro" id="IPR012337">
    <property type="entry name" value="RNaseH-like_sf"/>
</dbReference>
<dbReference type="InterPro" id="IPR002156">
    <property type="entry name" value="RNaseH_domain"/>
</dbReference>
<dbReference type="InterPro" id="IPR036397">
    <property type="entry name" value="RNaseH_sf"/>
</dbReference>
<dbReference type="InterPro" id="IPR022892">
    <property type="entry name" value="RNaseHI"/>
</dbReference>
<dbReference type="NCBIfam" id="NF001236">
    <property type="entry name" value="PRK00203.1"/>
    <property type="match status" value="1"/>
</dbReference>
<dbReference type="PANTHER" id="PTHR10642">
    <property type="entry name" value="RIBONUCLEASE H1"/>
    <property type="match status" value="1"/>
</dbReference>
<dbReference type="PANTHER" id="PTHR10642:SF26">
    <property type="entry name" value="RIBONUCLEASE H1"/>
    <property type="match status" value="1"/>
</dbReference>
<dbReference type="Pfam" id="PF00075">
    <property type="entry name" value="RNase_H"/>
    <property type="match status" value="1"/>
</dbReference>
<dbReference type="SUPFAM" id="SSF53098">
    <property type="entry name" value="Ribonuclease H-like"/>
    <property type="match status" value="1"/>
</dbReference>
<dbReference type="PROSITE" id="PS50879">
    <property type="entry name" value="RNASE_H_1"/>
    <property type="match status" value="1"/>
</dbReference>
<proteinExistence type="inferred from homology"/>
<comment type="function">
    <text evidence="1">Endonuclease that specifically degrades the RNA of RNA-DNA hybrids.</text>
</comment>
<comment type="catalytic activity">
    <reaction evidence="1">
        <text>Endonucleolytic cleavage to 5'-phosphomonoester.</text>
        <dbReference type="EC" id="3.1.26.4"/>
    </reaction>
</comment>
<comment type="cofactor">
    <cofactor evidence="1">
        <name>Mg(2+)</name>
        <dbReference type="ChEBI" id="CHEBI:18420"/>
    </cofactor>
    <text evidence="1">Binds 1 Mg(2+) ion per subunit. May bind a second metal ion at a regulatory site, or after substrate binding.</text>
</comment>
<comment type="subunit">
    <text evidence="1">Monomer.</text>
</comment>
<comment type="subcellular location">
    <subcellularLocation>
        <location evidence="1">Cytoplasm</location>
    </subcellularLocation>
</comment>
<comment type="similarity">
    <text evidence="1">Belongs to the RNase H family.</text>
</comment>
<organism>
    <name type="scientific">Aeromonas hydrophila subsp. hydrophila (strain ATCC 7966 / DSM 30187 / BCRC 13018 / CCUG 14551 / JCM 1027 / KCTC 2358 / NCIMB 9240 / NCTC 8049)</name>
    <dbReference type="NCBI Taxonomy" id="380703"/>
    <lineage>
        <taxon>Bacteria</taxon>
        <taxon>Pseudomonadati</taxon>
        <taxon>Pseudomonadota</taxon>
        <taxon>Gammaproteobacteria</taxon>
        <taxon>Aeromonadales</taxon>
        <taxon>Aeromonadaceae</taxon>
        <taxon>Aeromonas</taxon>
    </lineage>
</organism>
<evidence type="ECO:0000255" key="1">
    <source>
        <dbReference type="HAMAP-Rule" id="MF_00042"/>
    </source>
</evidence>
<evidence type="ECO:0000255" key="2">
    <source>
        <dbReference type="PROSITE-ProRule" id="PRU00408"/>
    </source>
</evidence>
<evidence type="ECO:0000256" key="3">
    <source>
        <dbReference type="SAM" id="MobiDB-lite"/>
    </source>
</evidence>
<keyword id="KW-0963">Cytoplasm</keyword>
<keyword id="KW-0255">Endonuclease</keyword>
<keyword id="KW-0378">Hydrolase</keyword>
<keyword id="KW-0460">Magnesium</keyword>
<keyword id="KW-0479">Metal-binding</keyword>
<keyword id="KW-0540">Nuclease</keyword>
<keyword id="KW-1185">Reference proteome</keyword>